<dbReference type="EC" id="4.1.99.22" evidence="1"/>
<dbReference type="EMBL" id="CP000814">
    <property type="protein sequence ID" value="ABV51757.1"/>
    <property type="molecule type" value="Genomic_DNA"/>
</dbReference>
<dbReference type="RefSeq" id="WP_002868437.1">
    <property type="nucleotide sequence ID" value="NC_009839.1"/>
</dbReference>
<dbReference type="SMR" id="A8FJX0"/>
<dbReference type="KEGG" id="cju:C8J_0158"/>
<dbReference type="HOGENOM" id="CLU_009273_0_1_7"/>
<dbReference type="UniPathway" id="UPA00344"/>
<dbReference type="GO" id="GO:0051539">
    <property type="term" value="F:4 iron, 4 sulfur cluster binding"/>
    <property type="evidence" value="ECO:0007669"/>
    <property type="project" value="UniProtKB-UniRule"/>
</dbReference>
<dbReference type="GO" id="GO:0061799">
    <property type="term" value="F:cyclic pyranopterin monophosphate synthase activity"/>
    <property type="evidence" value="ECO:0007669"/>
    <property type="project" value="TreeGrafter"/>
</dbReference>
<dbReference type="GO" id="GO:0061798">
    <property type="term" value="F:GTP 3',8'-cyclase activity"/>
    <property type="evidence" value="ECO:0007669"/>
    <property type="project" value="UniProtKB-UniRule"/>
</dbReference>
<dbReference type="GO" id="GO:0005525">
    <property type="term" value="F:GTP binding"/>
    <property type="evidence" value="ECO:0007669"/>
    <property type="project" value="UniProtKB-UniRule"/>
</dbReference>
<dbReference type="GO" id="GO:0046872">
    <property type="term" value="F:metal ion binding"/>
    <property type="evidence" value="ECO:0007669"/>
    <property type="project" value="UniProtKB-KW"/>
</dbReference>
<dbReference type="GO" id="GO:1904047">
    <property type="term" value="F:S-adenosyl-L-methionine binding"/>
    <property type="evidence" value="ECO:0007669"/>
    <property type="project" value="UniProtKB-UniRule"/>
</dbReference>
<dbReference type="GO" id="GO:0006777">
    <property type="term" value="P:Mo-molybdopterin cofactor biosynthetic process"/>
    <property type="evidence" value="ECO:0007669"/>
    <property type="project" value="UniProtKB-UniRule"/>
</dbReference>
<dbReference type="CDD" id="cd01335">
    <property type="entry name" value="Radical_SAM"/>
    <property type="match status" value="1"/>
</dbReference>
<dbReference type="CDD" id="cd21117">
    <property type="entry name" value="Twitch_MoaA"/>
    <property type="match status" value="1"/>
</dbReference>
<dbReference type="FunFam" id="3.20.20.70:FF:000285">
    <property type="entry name" value="GTP 3',8-cyclase"/>
    <property type="match status" value="1"/>
</dbReference>
<dbReference type="Gene3D" id="3.20.20.70">
    <property type="entry name" value="Aldolase class I"/>
    <property type="match status" value="1"/>
</dbReference>
<dbReference type="HAMAP" id="MF_01225_B">
    <property type="entry name" value="MoaA_B"/>
    <property type="match status" value="1"/>
</dbReference>
<dbReference type="InterPro" id="IPR013785">
    <property type="entry name" value="Aldolase_TIM"/>
</dbReference>
<dbReference type="InterPro" id="IPR006638">
    <property type="entry name" value="Elp3/MiaA/NifB-like_rSAM"/>
</dbReference>
<dbReference type="InterPro" id="IPR013483">
    <property type="entry name" value="MoaA"/>
</dbReference>
<dbReference type="InterPro" id="IPR000385">
    <property type="entry name" value="MoaA_NifB_PqqE_Fe-S-bd_CS"/>
</dbReference>
<dbReference type="InterPro" id="IPR010505">
    <property type="entry name" value="MoaA_twitch"/>
</dbReference>
<dbReference type="InterPro" id="IPR050105">
    <property type="entry name" value="MoCo_biosynth_MoaA/MoaC"/>
</dbReference>
<dbReference type="InterPro" id="IPR007197">
    <property type="entry name" value="rSAM"/>
</dbReference>
<dbReference type="NCBIfam" id="TIGR02666">
    <property type="entry name" value="moaA"/>
    <property type="match status" value="1"/>
</dbReference>
<dbReference type="PANTHER" id="PTHR22960:SF0">
    <property type="entry name" value="MOLYBDENUM COFACTOR BIOSYNTHESIS PROTEIN 1"/>
    <property type="match status" value="1"/>
</dbReference>
<dbReference type="PANTHER" id="PTHR22960">
    <property type="entry name" value="MOLYBDOPTERIN COFACTOR SYNTHESIS PROTEIN A"/>
    <property type="match status" value="1"/>
</dbReference>
<dbReference type="Pfam" id="PF13353">
    <property type="entry name" value="Fer4_12"/>
    <property type="match status" value="1"/>
</dbReference>
<dbReference type="Pfam" id="PF06463">
    <property type="entry name" value="Mob_synth_C"/>
    <property type="match status" value="1"/>
</dbReference>
<dbReference type="Pfam" id="PF04055">
    <property type="entry name" value="Radical_SAM"/>
    <property type="match status" value="1"/>
</dbReference>
<dbReference type="SFLD" id="SFLDG01383">
    <property type="entry name" value="cyclic_pyranopterin_phosphate"/>
    <property type="match status" value="1"/>
</dbReference>
<dbReference type="SFLD" id="SFLDG01072">
    <property type="entry name" value="dehydrogenase_like"/>
    <property type="match status" value="1"/>
</dbReference>
<dbReference type="SMART" id="SM00729">
    <property type="entry name" value="Elp3"/>
    <property type="match status" value="1"/>
</dbReference>
<dbReference type="SUPFAM" id="SSF102114">
    <property type="entry name" value="Radical SAM enzymes"/>
    <property type="match status" value="1"/>
</dbReference>
<dbReference type="PROSITE" id="PS01305">
    <property type="entry name" value="MOAA_NIFB_PQQE"/>
    <property type="match status" value="1"/>
</dbReference>
<dbReference type="PROSITE" id="PS51918">
    <property type="entry name" value="RADICAL_SAM"/>
    <property type="match status" value="1"/>
</dbReference>
<comment type="function">
    <text evidence="1">Catalyzes the cyclization of GTP to (8S)-3',8-cyclo-7,8-dihydroguanosine 5'-triphosphate.</text>
</comment>
<comment type="catalytic activity">
    <reaction evidence="1">
        <text>GTP + AH2 + S-adenosyl-L-methionine = (8S)-3',8-cyclo-7,8-dihydroguanosine 5'-triphosphate + 5'-deoxyadenosine + L-methionine + A + H(+)</text>
        <dbReference type="Rhea" id="RHEA:49576"/>
        <dbReference type="ChEBI" id="CHEBI:13193"/>
        <dbReference type="ChEBI" id="CHEBI:15378"/>
        <dbReference type="ChEBI" id="CHEBI:17319"/>
        <dbReference type="ChEBI" id="CHEBI:17499"/>
        <dbReference type="ChEBI" id="CHEBI:37565"/>
        <dbReference type="ChEBI" id="CHEBI:57844"/>
        <dbReference type="ChEBI" id="CHEBI:59789"/>
        <dbReference type="ChEBI" id="CHEBI:131766"/>
        <dbReference type="EC" id="4.1.99.22"/>
    </reaction>
</comment>
<comment type="cofactor">
    <cofactor evidence="1">
        <name>[4Fe-4S] cluster</name>
        <dbReference type="ChEBI" id="CHEBI:49883"/>
    </cofactor>
    <text evidence="1">Binds 2 [4Fe-4S] clusters. Binds 1 [4Fe-4S] cluster coordinated with 3 cysteines and an exchangeable S-adenosyl-L-methionine and 1 [4Fe-4S] cluster coordinated with 3 cysteines and the GTP-derived substrate.</text>
</comment>
<comment type="pathway">
    <text evidence="1">Cofactor biosynthesis; molybdopterin biosynthesis.</text>
</comment>
<comment type="subunit">
    <text evidence="1">Monomer and homodimer.</text>
</comment>
<comment type="similarity">
    <text evidence="1">Belongs to the radical SAM superfamily. MoaA family.</text>
</comment>
<sequence>MLIDQFGRKINYLRISVTQRCNFRCLYCMPKIPFDYQPKENLLSFEELFLFVKAAIDEGIEKIRITGGEPLLRKDLSIFIKMISDYKSDIDLAITTNGFLLKDFAKDLKNAGLKRLNISLDTLDHKKAKTLAQKDVLDSVLSGIDEALNLDLKVKLNTVALKNLNDDELISLLEFAKSKKAQIRFIEFMENTHAYGKLQGLKRDEIIQILSQKYQIQLIKKDEKAPVSIYKADDYEFGIIDPHSHEFCDSCNRIRLSAEGLLIPCLYFDEALSIKEAVRKGDIKAAVEILQEVLRNKPEKNKWSVVDNETSSRAFYQTGG</sequence>
<organism>
    <name type="scientific">Campylobacter jejuni subsp. jejuni serotype O:6 (strain 81116 / NCTC 11828)</name>
    <dbReference type="NCBI Taxonomy" id="407148"/>
    <lineage>
        <taxon>Bacteria</taxon>
        <taxon>Pseudomonadati</taxon>
        <taxon>Campylobacterota</taxon>
        <taxon>Epsilonproteobacteria</taxon>
        <taxon>Campylobacterales</taxon>
        <taxon>Campylobacteraceae</taxon>
        <taxon>Campylobacter</taxon>
    </lineage>
</organism>
<gene>
    <name evidence="1" type="primary">moaA</name>
    <name type="ordered locus">C8J_0158</name>
</gene>
<keyword id="KW-0004">4Fe-4S</keyword>
<keyword id="KW-0342">GTP-binding</keyword>
<keyword id="KW-0408">Iron</keyword>
<keyword id="KW-0411">Iron-sulfur</keyword>
<keyword id="KW-0456">Lyase</keyword>
<keyword id="KW-0479">Metal-binding</keyword>
<keyword id="KW-0501">Molybdenum cofactor biosynthesis</keyword>
<keyword id="KW-0547">Nucleotide-binding</keyword>
<keyword id="KW-0949">S-adenosyl-L-methionine</keyword>
<protein>
    <recommendedName>
        <fullName evidence="1">GTP 3',8-cyclase</fullName>
        <ecNumber evidence="1">4.1.99.22</ecNumber>
    </recommendedName>
    <alternativeName>
        <fullName evidence="1">Molybdenum cofactor biosynthesis protein A</fullName>
    </alternativeName>
</protein>
<name>MOAA_CAMJ8</name>
<feature type="chain" id="PRO_1000073163" description="GTP 3',8-cyclase">
    <location>
        <begin position="1"/>
        <end position="320"/>
    </location>
</feature>
<feature type="domain" description="Radical SAM core" evidence="2">
    <location>
        <begin position="5"/>
        <end position="225"/>
    </location>
</feature>
<feature type="binding site" evidence="1">
    <location>
        <position position="14"/>
    </location>
    <ligand>
        <name>GTP</name>
        <dbReference type="ChEBI" id="CHEBI:37565"/>
    </ligand>
</feature>
<feature type="binding site" evidence="1">
    <location>
        <position position="21"/>
    </location>
    <ligand>
        <name>[4Fe-4S] cluster</name>
        <dbReference type="ChEBI" id="CHEBI:49883"/>
        <label>1</label>
        <note>4Fe-4S-S-AdoMet</note>
    </ligand>
</feature>
<feature type="binding site" evidence="1">
    <location>
        <position position="25"/>
    </location>
    <ligand>
        <name>[4Fe-4S] cluster</name>
        <dbReference type="ChEBI" id="CHEBI:49883"/>
        <label>1</label>
        <note>4Fe-4S-S-AdoMet</note>
    </ligand>
</feature>
<feature type="binding site" evidence="1">
    <location>
        <position position="27"/>
    </location>
    <ligand>
        <name>S-adenosyl-L-methionine</name>
        <dbReference type="ChEBI" id="CHEBI:59789"/>
    </ligand>
</feature>
<feature type="binding site" evidence="1">
    <location>
        <position position="28"/>
    </location>
    <ligand>
        <name>[4Fe-4S] cluster</name>
        <dbReference type="ChEBI" id="CHEBI:49883"/>
        <label>1</label>
        <note>4Fe-4S-S-AdoMet</note>
    </ligand>
</feature>
<feature type="binding site" evidence="1">
    <location>
        <position position="64"/>
    </location>
    <ligand>
        <name>GTP</name>
        <dbReference type="ChEBI" id="CHEBI:37565"/>
    </ligand>
</feature>
<feature type="binding site" evidence="1">
    <location>
        <position position="68"/>
    </location>
    <ligand>
        <name>S-adenosyl-L-methionine</name>
        <dbReference type="ChEBI" id="CHEBI:59789"/>
    </ligand>
</feature>
<feature type="binding site" evidence="1">
    <location>
        <position position="95"/>
    </location>
    <ligand>
        <name>GTP</name>
        <dbReference type="ChEBI" id="CHEBI:37565"/>
    </ligand>
</feature>
<feature type="binding site" evidence="1">
    <location>
        <position position="119"/>
    </location>
    <ligand>
        <name>S-adenosyl-L-methionine</name>
        <dbReference type="ChEBI" id="CHEBI:59789"/>
    </ligand>
</feature>
<feature type="binding site" evidence="1">
    <location>
        <position position="155"/>
    </location>
    <ligand>
        <name>GTP</name>
        <dbReference type="ChEBI" id="CHEBI:37565"/>
    </ligand>
</feature>
<feature type="binding site" evidence="1">
    <location>
        <position position="189"/>
    </location>
    <ligand>
        <name>S-adenosyl-L-methionine</name>
        <dbReference type="ChEBI" id="CHEBI:59789"/>
    </ligand>
</feature>
<feature type="binding site" evidence="1">
    <location>
        <position position="248"/>
    </location>
    <ligand>
        <name>[4Fe-4S] cluster</name>
        <dbReference type="ChEBI" id="CHEBI:49883"/>
        <label>2</label>
        <note>4Fe-4S-substrate</note>
    </ligand>
</feature>
<feature type="binding site" evidence="1">
    <location>
        <position position="251"/>
    </location>
    <ligand>
        <name>[4Fe-4S] cluster</name>
        <dbReference type="ChEBI" id="CHEBI:49883"/>
        <label>2</label>
        <note>4Fe-4S-substrate</note>
    </ligand>
</feature>
<feature type="binding site" evidence="1">
    <location>
        <begin position="253"/>
        <end position="255"/>
    </location>
    <ligand>
        <name>GTP</name>
        <dbReference type="ChEBI" id="CHEBI:37565"/>
    </ligand>
</feature>
<feature type="binding site" evidence="1">
    <location>
        <position position="265"/>
    </location>
    <ligand>
        <name>[4Fe-4S] cluster</name>
        <dbReference type="ChEBI" id="CHEBI:49883"/>
        <label>2</label>
        <note>4Fe-4S-substrate</note>
    </ligand>
</feature>
<accession>A8FJX0</accession>
<proteinExistence type="inferred from homology"/>
<reference key="1">
    <citation type="journal article" date="2007" name="J. Bacteriol.">
        <title>The complete genome sequence of Campylobacter jejuni strain 81116 (NCTC11828).</title>
        <authorList>
            <person name="Pearson B.M."/>
            <person name="Gaskin D.J.H."/>
            <person name="Segers R.P.A.M."/>
            <person name="Wells J.M."/>
            <person name="Nuijten P.J.M."/>
            <person name="van Vliet A.H.M."/>
        </authorList>
    </citation>
    <scope>NUCLEOTIDE SEQUENCE [LARGE SCALE GENOMIC DNA]</scope>
    <source>
        <strain>81116 / NCTC 11828</strain>
    </source>
</reference>
<evidence type="ECO:0000255" key="1">
    <source>
        <dbReference type="HAMAP-Rule" id="MF_01225"/>
    </source>
</evidence>
<evidence type="ECO:0000255" key="2">
    <source>
        <dbReference type="PROSITE-ProRule" id="PRU01266"/>
    </source>
</evidence>